<feature type="chain" id="PRO_1000094270" description="2-C-methyl-D-erythritol 2,4-cyclodiphosphate synthase">
    <location>
        <begin position="1"/>
        <end position="162"/>
    </location>
</feature>
<feature type="binding site" evidence="1">
    <location>
        <begin position="9"/>
        <end position="11"/>
    </location>
    <ligand>
        <name>4-CDP-2-C-methyl-D-erythritol 2-phosphate</name>
        <dbReference type="ChEBI" id="CHEBI:57919"/>
    </ligand>
</feature>
<feature type="binding site" evidence="1">
    <location>
        <position position="9"/>
    </location>
    <ligand>
        <name>a divalent metal cation</name>
        <dbReference type="ChEBI" id="CHEBI:60240"/>
    </ligand>
</feature>
<feature type="binding site" evidence="1">
    <location>
        <position position="11"/>
    </location>
    <ligand>
        <name>a divalent metal cation</name>
        <dbReference type="ChEBI" id="CHEBI:60240"/>
    </ligand>
</feature>
<feature type="binding site" evidence="1">
    <location>
        <begin position="37"/>
        <end position="38"/>
    </location>
    <ligand>
        <name>4-CDP-2-C-methyl-D-erythritol 2-phosphate</name>
        <dbReference type="ChEBI" id="CHEBI:57919"/>
    </ligand>
</feature>
<feature type="binding site" evidence="1">
    <location>
        <position position="45"/>
    </location>
    <ligand>
        <name>a divalent metal cation</name>
        <dbReference type="ChEBI" id="CHEBI:60240"/>
    </ligand>
</feature>
<feature type="binding site" evidence="1">
    <location>
        <begin position="59"/>
        <end position="61"/>
    </location>
    <ligand>
        <name>4-CDP-2-C-methyl-D-erythritol 2-phosphate</name>
        <dbReference type="ChEBI" id="CHEBI:57919"/>
    </ligand>
</feature>
<feature type="binding site" evidence="1">
    <location>
        <begin position="64"/>
        <end position="68"/>
    </location>
    <ligand>
        <name>4-CDP-2-C-methyl-D-erythritol 2-phosphate</name>
        <dbReference type="ChEBI" id="CHEBI:57919"/>
    </ligand>
</feature>
<feature type="binding site" evidence="1">
    <location>
        <begin position="135"/>
        <end position="138"/>
    </location>
    <ligand>
        <name>4-CDP-2-C-methyl-D-erythritol 2-phosphate</name>
        <dbReference type="ChEBI" id="CHEBI:57919"/>
    </ligand>
</feature>
<feature type="binding site" evidence="1">
    <location>
        <position position="145"/>
    </location>
    <ligand>
        <name>4-CDP-2-C-methyl-D-erythritol 2-phosphate</name>
        <dbReference type="ChEBI" id="CHEBI:57919"/>
    </ligand>
</feature>
<feature type="site" description="Transition state stabilizer" evidence="1">
    <location>
        <position position="37"/>
    </location>
</feature>
<feature type="site" description="Transition state stabilizer" evidence="1">
    <location>
        <position position="136"/>
    </location>
</feature>
<name>ISPF_LEPBP</name>
<reference key="1">
    <citation type="journal article" date="2008" name="PLoS ONE">
        <title>Genome sequence of the saprophyte Leptospira biflexa provides insights into the evolution of Leptospira and the pathogenesis of leptospirosis.</title>
        <authorList>
            <person name="Picardeau M."/>
            <person name="Bulach D.M."/>
            <person name="Bouchier C."/>
            <person name="Zuerner R.L."/>
            <person name="Zidane N."/>
            <person name="Wilson P.J."/>
            <person name="Creno S."/>
            <person name="Kuczek E.S."/>
            <person name="Bommezzadri S."/>
            <person name="Davis J.C."/>
            <person name="McGrath A."/>
            <person name="Johnson M.J."/>
            <person name="Boursaux-Eude C."/>
            <person name="Seemann T."/>
            <person name="Rouy Z."/>
            <person name="Coppel R.L."/>
            <person name="Rood J.I."/>
            <person name="Lajus A."/>
            <person name="Davies J.K."/>
            <person name="Medigue C."/>
            <person name="Adler B."/>
        </authorList>
    </citation>
    <scope>NUCLEOTIDE SEQUENCE [LARGE SCALE GENOMIC DNA]</scope>
    <source>
        <strain>Patoc 1 / ATCC 23582 / Paris</strain>
    </source>
</reference>
<sequence>MFRVGNGIDFHKLIHEPFRPLVLAGVEIKSEFAFLGHSDADVILHAVADAILGALSLGDIGVHFPDTDPQYKNMKSTRIIEKCLELVAEKKFKLINVDCTYVGDHPKISPIRAELNASLANITKLPLDCVSIKATTSEGMGALGRSEGVMVMATVLIESLKK</sequence>
<evidence type="ECO:0000255" key="1">
    <source>
        <dbReference type="HAMAP-Rule" id="MF_00107"/>
    </source>
</evidence>
<accession>B0SJL7</accession>
<proteinExistence type="inferred from homology"/>
<dbReference type="EC" id="4.6.1.12" evidence="1"/>
<dbReference type="EMBL" id="CP000786">
    <property type="protein sequence ID" value="ABZ96466.1"/>
    <property type="molecule type" value="Genomic_DNA"/>
</dbReference>
<dbReference type="RefSeq" id="WP_012387354.1">
    <property type="nucleotide sequence ID" value="NC_010602.1"/>
</dbReference>
<dbReference type="SMR" id="B0SJL7"/>
<dbReference type="STRING" id="456481.LEPBI_I0322"/>
<dbReference type="KEGG" id="lbi:LEPBI_I0322"/>
<dbReference type="HOGENOM" id="CLU_084630_2_1_12"/>
<dbReference type="OrthoDB" id="9804336at2"/>
<dbReference type="BioCyc" id="LBIF456481:LEPBI_RS01575-MONOMER"/>
<dbReference type="UniPathway" id="UPA00056">
    <property type="reaction ID" value="UER00095"/>
</dbReference>
<dbReference type="Proteomes" id="UP000001847">
    <property type="component" value="Chromosome I"/>
</dbReference>
<dbReference type="GO" id="GO:0008685">
    <property type="term" value="F:2-C-methyl-D-erythritol 2,4-cyclodiphosphate synthase activity"/>
    <property type="evidence" value="ECO:0007669"/>
    <property type="project" value="UniProtKB-UniRule"/>
</dbReference>
<dbReference type="GO" id="GO:0046872">
    <property type="term" value="F:metal ion binding"/>
    <property type="evidence" value="ECO:0007669"/>
    <property type="project" value="UniProtKB-KW"/>
</dbReference>
<dbReference type="GO" id="GO:0019288">
    <property type="term" value="P:isopentenyl diphosphate biosynthetic process, methylerythritol 4-phosphate pathway"/>
    <property type="evidence" value="ECO:0007669"/>
    <property type="project" value="UniProtKB-UniRule"/>
</dbReference>
<dbReference type="GO" id="GO:0016114">
    <property type="term" value="P:terpenoid biosynthetic process"/>
    <property type="evidence" value="ECO:0007669"/>
    <property type="project" value="InterPro"/>
</dbReference>
<dbReference type="CDD" id="cd00554">
    <property type="entry name" value="MECDP_synthase"/>
    <property type="match status" value="1"/>
</dbReference>
<dbReference type="Gene3D" id="3.30.1330.50">
    <property type="entry name" value="2-C-methyl-D-erythritol 2,4-cyclodiphosphate synthase"/>
    <property type="match status" value="1"/>
</dbReference>
<dbReference type="HAMAP" id="MF_00107">
    <property type="entry name" value="IspF"/>
    <property type="match status" value="1"/>
</dbReference>
<dbReference type="InterPro" id="IPR003526">
    <property type="entry name" value="MECDP_synthase"/>
</dbReference>
<dbReference type="InterPro" id="IPR020555">
    <property type="entry name" value="MECDP_synthase_CS"/>
</dbReference>
<dbReference type="InterPro" id="IPR036571">
    <property type="entry name" value="MECDP_synthase_sf"/>
</dbReference>
<dbReference type="NCBIfam" id="TIGR00151">
    <property type="entry name" value="ispF"/>
    <property type="match status" value="1"/>
</dbReference>
<dbReference type="PANTHER" id="PTHR43181">
    <property type="entry name" value="2-C-METHYL-D-ERYTHRITOL 2,4-CYCLODIPHOSPHATE SYNTHASE, CHLOROPLASTIC"/>
    <property type="match status" value="1"/>
</dbReference>
<dbReference type="PANTHER" id="PTHR43181:SF1">
    <property type="entry name" value="2-C-METHYL-D-ERYTHRITOL 2,4-CYCLODIPHOSPHATE SYNTHASE, CHLOROPLASTIC"/>
    <property type="match status" value="1"/>
</dbReference>
<dbReference type="Pfam" id="PF02542">
    <property type="entry name" value="YgbB"/>
    <property type="match status" value="1"/>
</dbReference>
<dbReference type="SUPFAM" id="SSF69765">
    <property type="entry name" value="IpsF-like"/>
    <property type="match status" value="1"/>
</dbReference>
<dbReference type="PROSITE" id="PS01350">
    <property type="entry name" value="ISPF"/>
    <property type="match status" value="1"/>
</dbReference>
<keyword id="KW-0414">Isoprene biosynthesis</keyword>
<keyword id="KW-0456">Lyase</keyword>
<keyword id="KW-0479">Metal-binding</keyword>
<keyword id="KW-1185">Reference proteome</keyword>
<comment type="function">
    <text evidence="1">Involved in the biosynthesis of isopentenyl diphosphate (IPP) and dimethylallyl diphosphate (DMAPP), two major building blocks of isoprenoid compounds. Catalyzes the conversion of 4-diphosphocytidyl-2-C-methyl-D-erythritol 2-phosphate (CDP-ME2P) to 2-C-methyl-D-erythritol 2,4-cyclodiphosphate (ME-CPP) with a corresponding release of cytidine 5-monophosphate (CMP).</text>
</comment>
<comment type="catalytic activity">
    <reaction evidence="1">
        <text>4-CDP-2-C-methyl-D-erythritol 2-phosphate = 2-C-methyl-D-erythritol 2,4-cyclic diphosphate + CMP</text>
        <dbReference type="Rhea" id="RHEA:23864"/>
        <dbReference type="ChEBI" id="CHEBI:57919"/>
        <dbReference type="ChEBI" id="CHEBI:58483"/>
        <dbReference type="ChEBI" id="CHEBI:60377"/>
        <dbReference type="EC" id="4.6.1.12"/>
    </reaction>
</comment>
<comment type="cofactor">
    <cofactor evidence="1">
        <name>a divalent metal cation</name>
        <dbReference type="ChEBI" id="CHEBI:60240"/>
    </cofactor>
    <text evidence="1">Binds 1 divalent metal cation per subunit.</text>
</comment>
<comment type="pathway">
    <text evidence="1">Isoprenoid biosynthesis; isopentenyl diphosphate biosynthesis via DXP pathway; isopentenyl diphosphate from 1-deoxy-D-xylulose 5-phosphate: step 4/6.</text>
</comment>
<comment type="subunit">
    <text evidence="1">Homotrimer.</text>
</comment>
<comment type="similarity">
    <text evidence="1">Belongs to the IspF family.</text>
</comment>
<gene>
    <name evidence="1" type="primary">ispF</name>
    <name type="ordered locus">LEPBI_I0322</name>
</gene>
<organism>
    <name type="scientific">Leptospira biflexa serovar Patoc (strain Patoc 1 / ATCC 23582 / Paris)</name>
    <dbReference type="NCBI Taxonomy" id="456481"/>
    <lineage>
        <taxon>Bacteria</taxon>
        <taxon>Pseudomonadati</taxon>
        <taxon>Spirochaetota</taxon>
        <taxon>Spirochaetia</taxon>
        <taxon>Leptospirales</taxon>
        <taxon>Leptospiraceae</taxon>
        <taxon>Leptospira</taxon>
    </lineage>
</organism>
<protein>
    <recommendedName>
        <fullName evidence="1">2-C-methyl-D-erythritol 2,4-cyclodiphosphate synthase</fullName>
        <shortName evidence="1">MECDP-synthase</shortName>
        <shortName evidence="1">MECPP-synthase</shortName>
        <shortName evidence="1">MECPS</shortName>
        <ecNumber evidence="1">4.6.1.12</ecNumber>
    </recommendedName>
</protein>